<dbReference type="EMBL" id="AE014075">
    <property type="protein sequence ID" value="AAN79696.1"/>
    <property type="molecule type" value="Genomic_DNA"/>
</dbReference>
<dbReference type="RefSeq" id="WP_000768217.1">
    <property type="nucleotide sequence ID" value="NZ_CP051263.1"/>
</dbReference>
<dbReference type="SMR" id="P62606"/>
<dbReference type="STRING" id="199310.c1239"/>
<dbReference type="KEGG" id="ecc:c1239"/>
<dbReference type="eggNOG" id="COG3539">
    <property type="taxonomic scope" value="Bacteria"/>
</dbReference>
<dbReference type="HOGENOM" id="CLU_088965_0_0_6"/>
<dbReference type="BioCyc" id="ECOL199310:C1239-MONOMER"/>
<dbReference type="Proteomes" id="UP000001410">
    <property type="component" value="Chromosome"/>
</dbReference>
<dbReference type="GO" id="GO:0009289">
    <property type="term" value="C:pilus"/>
    <property type="evidence" value="ECO:0007669"/>
    <property type="project" value="UniProtKB-SubCell"/>
</dbReference>
<dbReference type="GO" id="GO:0043709">
    <property type="term" value="P:cell adhesion involved in single-species biofilm formation"/>
    <property type="evidence" value="ECO:0007669"/>
    <property type="project" value="TreeGrafter"/>
</dbReference>
<dbReference type="FunFam" id="2.60.40.1090:FF:000001">
    <property type="entry name" value="Type-1 fimbrial major subunit"/>
    <property type="match status" value="1"/>
</dbReference>
<dbReference type="Gene3D" id="2.60.40.1090">
    <property type="entry name" value="Fimbrial-type adhesion domain"/>
    <property type="match status" value="1"/>
</dbReference>
<dbReference type="InterPro" id="IPR000259">
    <property type="entry name" value="Adhesion_dom_fimbrial"/>
</dbReference>
<dbReference type="InterPro" id="IPR036937">
    <property type="entry name" value="Adhesion_dom_fimbrial_sf"/>
</dbReference>
<dbReference type="InterPro" id="IPR008966">
    <property type="entry name" value="Adhesion_dom_sf"/>
</dbReference>
<dbReference type="InterPro" id="IPR050263">
    <property type="entry name" value="Bact_Fimbrial_Adh_Pro"/>
</dbReference>
<dbReference type="NCBIfam" id="NF011741">
    <property type="entry name" value="PRK15194.1"/>
    <property type="match status" value="1"/>
</dbReference>
<dbReference type="PANTHER" id="PTHR33420">
    <property type="entry name" value="FIMBRIAL SUBUNIT ELFA-RELATED"/>
    <property type="match status" value="1"/>
</dbReference>
<dbReference type="PANTHER" id="PTHR33420:SF12">
    <property type="entry name" value="FIMBRIN-LIKE PROTEIN FIMI-RELATED"/>
    <property type="match status" value="1"/>
</dbReference>
<dbReference type="Pfam" id="PF00419">
    <property type="entry name" value="Fimbrial"/>
    <property type="match status" value="1"/>
</dbReference>
<dbReference type="SUPFAM" id="SSF49401">
    <property type="entry name" value="Bacterial adhesins"/>
    <property type="match status" value="1"/>
</dbReference>
<protein>
    <recommendedName>
        <fullName>Type-1 fimbrial protein, C chain</fullName>
    </recommendedName>
    <alternativeName>
        <fullName>Type-1C pilin</fullName>
    </alternativeName>
</protein>
<sequence length="180" mass="18328">MKLKFISMAVFSALTLGVATNASAVTTVNGGTVHFKGEVVNAACAVNTNSFDQTVNLGQVRSERLKVDGAKSNPVGFTIELNDCDSQVSAGAGIVFSGPAVTGKTDVLALQSSAAGSATNVGVQITDHTGKVVPLDGTASSTFTLTDGTNKIPFQAVYYATGQATAGIANADATFKVQYQ</sequence>
<comment type="function">
    <text evidence="1">Fimbriae (also called pili), polar filaments radiating from the surface of the bacterium to a length of 0.5-1.5 micrometers and numbering 100-300 per cell, enable bacteria to colonize the epithelium of specific host organs.</text>
</comment>
<comment type="subcellular location">
    <subcellularLocation>
        <location evidence="1">Fimbrium</location>
    </subcellularLocation>
</comment>
<comment type="similarity">
    <text evidence="2">Belongs to the fimbrial protein family.</text>
</comment>
<proteinExistence type="inferred from homology"/>
<gene>
    <name type="primary">pilC</name>
    <name type="synonym">focA</name>
    <name type="ordered locus">c1239</name>
</gene>
<accession>P62606</accession>
<accession>P08561</accession>
<keyword id="KW-1015">Disulfide bond</keyword>
<keyword id="KW-0281">Fimbrium</keyword>
<keyword id="KW-1185">Reference proteome</keyword>
<keyword id="KW-0732">Signal</keyword>
<evidence type="ECO:0000250" key="1"/>
<evidence type="ECO:0000305" key="2"/>
<name>FIM1C_ECOL6</name>
<organism>
    <name type="scientific">Escherichia coli O6:H1 (strain CFT073 / ATCC 700928 / UPEC)</name>
    <dbReference type="NCBI Taxonomy" id="199310"/>
    <lineage>
        <taxon>Bacteria</taxon>
        <taxon>Pseudomonadati</taxon>
        <taxon>Pseudomonadota</taxon>
        <taxon>Gammaproteobacteria</taxon>
        <taxon>Enterobacterales</taxon>
        <taxon>Enterobacteriaceae</taxon>
        <taxon>Escherichia</taxon>
    </lineage>
</organism>
<reference key="1">
    <citation type="journal article" date="2002" name="Proc. Natl. Acad. Sci. U.S.A.">
        <title>Extensive mosaic structure revealed by the complete genome sequence of uropathogenic Escherichia coli.</title>
        <authorList>
            <person name="Welch R.A."/>
            <person name="Burland V."/>
            <person name="Plunkett G. III"/>
            <person name="Redford P."/>
            <person name="Roesch P."/>
            <person name="Rasko D."/>
            <person name="Buckles E.L."/>
            <person name="Liou S.-R."/>
            <person name="Boutin A."/>
            <person name="Hackett J."/>
            <person name="Stroud D."/>
            <person name="Mayhew G.F."/>
            <person name="Rose D.J."/>
            <person name="Zhou S."/>
            <person name="Schwartz D.C."/>
            <person name="Perna N.T."/>
            <person name="Mobley H.L.T."/>
            <person name="Donnenberg M.S."/>
            <person name="Blattner F.R."/>
        </authorList>
    </citation>
    <scope>NUCLEOTIDE SEQUENCE [LARGE SCALE GENOMIC DNA]</scope>
    <source>
        <strain>CFT073 / ATCC 700928 / UPEC</strain>
    </source>
</reference>
<feature type="signal peptide" evidence="1">
    <location>
        <begin position="1"/>
        <end position="23"/>
    </location>
</feature>
<feature type="chain" id="PRO_0000009176" description="Type-1 fimbrial protein, C chain">
    <location>
        <begin position="24"/>
        <end position="180"/>
    </location>
</feature>
<feature type="disulfide bond" evidence="2">
    <location>
        <begin position="44"/>
        <end position="84"/>
    </location>
</feature>